<reference key="1">
    <citation type="journal article" date="1997" name="Nature">
        <title>The nucleotide sequence of Saccharomyces cerevisiae chromosome V.</title>
        <authorList>
            <person name="Dietrich F.S."/>
            <person name="Mulligan J.T."/>
            <person name="Hennessy K.M."/>
            <person name="Yelton M.A."/>
            <person name="Allen E."/>
            <person name="Araujo R."/>
            <person name="Aviles E."/>
            <person name="Berno A."/>
            <person name="Brennan T."/>
            <person name="Carpenter J."/>
            <person name="Chen E."/>
            <person name="Cherry J.M."/>
            <person name="Chung E."/>
            <person name="Duncan M."/>
            <person name="Guzman E."/>
            <person name="Hartzell G."/>
            <person name="Hunicke-Smith S."/>
            <person name="Hyman R.W."/>
            <person name="Kayser A."/>
            <person name="Komp C."/>
            <person name="Lashkari D."/>
            <person name="Lew H."/>
            <person name="Lin D."/>
            <person name="Mosedale D."/>
            <person name="Nakahara K."/>
            <person name="Namath A."/>
            <person name="Norgren R."/>
            <person name="Oefner P."/>
            <person name="Oh C."/>
            <person name="Petel F.X."/>
            <person name="Roberts D."/>
            <person name="Sehl P."/>
            <person name="Schramm S."/>
            <person name="Shogren T."/>
            <person name="Smith V."/>
            <person name="Taylor P."/>
            <person name="Wei Y."/>
            <person name="Botstein D."/>
            <person name="Davis R.W."/>
        </authorList>
    </citation>
    <scope>NUCLEOTIDE SEQUENCE [LARGE SCALE GENOMIC DNA]</scope>
    <source>
        <strain>ATCC 204508 / S288c</strain>
    </source>
</reference>
<reference key="2">
    <citation type="journal article" date="2014" name="G3 (Bethesda)">
        <title>The reference genome sequence of Saccharomyces cerevisiae: Then and now.</title>
        <authorList>
            <person name="Engel S.R."/>
            <person name="Dietrich F.S."/>
            <person name="Fisk D.G."/>
            <person name="Binkley G."/>
            <person name="Balakrishnan R."/>
            <person name="Costanzo M.C."/>
            <person name="Dwight S.S."/>
            <person name="Hitz B.C."/>
            <person name="Karra K."/>
            <person name="Nash R.S."/>
            <person name="Weng S."/>
            <person name="Wong E.D."/>
            <person name="Lloyd P."/>
            <person name="Skrzypek M.S."/>
            <person name="Miyasato S.R."/>
            <person name="Simison M."/>
            <person name="Cherry J.M."/>
        </authorList>
    </citation>
    <scope>GENOME REANNOTATION</scope>
    <source>
        <strain>ATCC 204508 / S288c</strain>
    </source>
</reference>
<reference key="3">
    <citation type="journal article" date="2006" name="Proc. Natl. Acad. Sci. U.S.A.">
        <title>A global topology map of the Saccharomyces cerevisiae membrane proteome.</title>
        <authorList>
            <person name="Kim H."/>
            <person name="Melen K."/>
            <person name="Oesterberg M."/>
            <person name="von Heijne G."/>
        </authorList>
    </citation>
    <scope>TOPOLOGY [LARGE SCALE ANALYSIS]</scope>
    <source>
        <strain>ATCC 208353 / W303-1A</strain>
    </source>
</reference>
<reference key="4">
    <citation type="journal article" date="2010" name="Curr. Genet.">
        <title>Genomic analysis of severe hypersensitivity to hygromycin B reveals linkage to vacuolar defects and new vacuolar gene functions in Saccharomyces cerevisiae.</title>
        <authorList>
            <person name="Banuelos M.G."/>
            <person name="Moreno D.E."/>
            <person name="Olson D.K."/>
            <person name="Nguyen Q."/>
            <person name="Ricarte F."/>
            <person name="Aguilera-Sandoval C.R."/>
            <person name="Gharakhanian E."/>
        </authorList>
    </citation>
    <scope>DISRUPTION PHENOTYPE</scope>
    <scope>FUNCTION</scope>
</reference>
<organism>
    <name type="scientific">Saccharomyces cerevisiae (strain ATCC 204508 / S288c)</name>
    <name type="common">Baker's yeast</name>
    <dbReference type="NCBI Taxonomy" id="559292"/>
    <lineage>
        <taxon>Eukaryota</taxon>
        <taxon>Fungi</taxon>
        <taxon>Dikarya</taxon>
        <taxon>Ascomycota</taxon>
        <taxon>Saccharomycotina</taxon>
        <taxon>Saccharomycetes</taxon>
        <taxon>Saccharomycetales</taxon>
        <taxon>Saccharomycetaceae</taxon>
        <taxon>Saccharomyces</taxon>
    </lineage>
</organism>
<comment type="function">
    <text evidence="3">Involved in vacuolar trafficking.</text>
</comment>
<comment type="subcellular location">
    <subcellularLocation>
        <location evidence="1">Membrane</location>
        <topology evidence="1">Multi-pass membrane protein</topology>
    </subcellularLocation>
</comment>
<comment type="disruption phenotype">
    <text evidence="3">Leads to hygromycin B hypersentsitivity, increased vacuolar fragmentation, defective CPY processing, and extreme sensitivities to pH extremes, divalent cations, and multiple drugs.</text>
</comment>
<feature type="signal peptide" evidence="1">
    <location>
        <begin position="1"/>
        <end position="17"/>
    </location>
</feature>
<feature type="chain" id="PRO_0000202603" description="Hypersensitivity to hygromycin-B protein 1">
    <location>
        <begin position="18"/>
        <end position="102"/>
    </location>
</feature>
<feature type="transmembrane region" description="Helical" evidence="1">
    <location>
        <begin position="18"/>
        <end position="38"/>
    </location>
</feature>
<feature type="topological domain" description="Cytoplasmic" evidence="5">
    <location>
        <begin position="39"/>
        <end position="69"/>
    </location>
</feature>
<feature type="transmembrane region" description="Helical" evidence="1">
    <location>
        <begin position="70"/>
        <end position="90"/>
    </location>
</feature>
<feature type="topological domain" description="Extracellular" evidence="2">
    <location>
        <begin position="91"/>
        <end position="102"/>
    </location>
</feature>
<dbReference type="EMBL" id="U18795">
    <property type="protein sequence ID" value="AAB65028.1"/>
    <property type="molecule type" value="Genomic_DNA"/>
</dbReference>
<dbReference type="EMBL" id="BK006939">
    <property type="protein sequence ID" value="DAD54804.1"/>
    <property type="molecule type" value="Genomic_DNA"/>
</dbReference>
<dbReference type="PIR" id="S50530">
    <property type="entry name" value="S50530"/>
</dbReference>
<dbReference type="RefSeq" id="NP_001381963.1">
    <property type="nucleotide sequence ID" value="NM_001395033.1"/>
</dbReference>
<dbReference type="DIP" id="DIP-5050N"/>
<dbReference type="FunCoup" id="P39982">
    <property type="interactions" value="25"/>
</dbReference>
<dbReference type="IntAct" id="P39982">
    <property type="interactions" value="2"/>
</dbReference>
<dbReference type="STRING" id="4932.YEL059W"/>
<dbReference type="PaxDb" id="4932-YEL059W"/>
<dbReference type="EnsemblFungi" id="YEL059W_mRNA">
    <property type="protein sequence ID" value="YEL059W"/>
    <property type="gene ID" value="YEL059W"/>
</dbReference>
<dbReference type="GeneID" id="856651"/>
<dbReference type="AGR" id="SGD:S000000785"/>
<dbReference type="SGD" id="S000000785">
    <property type="gene designation" value="HHY1"/>
</dbReference>
<dbReference type="HOGENOM" id="CLU_2279674_0_0_1"/>
<dbReference type="InParanoid" id="P39982"/>
<dbReference type="PRO" id="PR:P39982"/>
<dbReference type="Proteomes" id="UP000002311">
    <property type="component" value="Chromosome V"/>
</dbReference>
<dbReference type="RNAct" id="P39982">
    <property type="molecule type" value="protein"/>
</dbReference>
<dbReference type="GO" id="GO:0016020">
    <property type="term" value="C:membrane"/>
    <property type="evidence" value="ECO:0000255"/>
    <property type="project" value="SGD"/>
</dbReference>
<gene>
    <name evidence="4" type="primary">HHY1</name>
    <name evidence="6" type="ordered locus">YEL059W</name>
</gene>
<evidence type="ECO:0000255" key="1"/>
<evidence type="ECO:0000269" key="2">
    <source>
    </source>
</evidence>
<evidence type="ECO:0000269" key="3">
    <source>
    </source>
</evidence>
<evidence type="ECO:0000303" key="4">
    <source>
    </source>
</evidence>
<evidence type="ECO:0000305" key="5">
    <source>
    </source>
</evidence>
<evidence type="ECO:0000312" key="6">
    <source>
        <dbReference type="SGD" id="S000000785"/>
    </source>
</evidence>
<name>HHY1_YEAST</name>
<keyword id="KW-0472">Membrane</keyword>
<keyword id="KW-1185">Reference proteome</keyword>
<keyword id="KW-0732">Signal</keyword>
<keyword id="KW-0812">Transmembrane</keyword>
<keyword id="KW-1133">Transmembrane helix</keyword>
<proteinExistence type="evidence at protein level"/>
<protein>
    <recommendedName>
        <fullName evidence="4">Hypersensitivity to hygromycin-B protein 1</fullName>
    </recommendedName>
</protein>
<accession>P39982</accession>
<accession>A0A8D9PCP9</accession>
<sequence>MSLSFLLFSPFLPPCFSSISICLSVLSTVSFFFAFTIPHYVLRCGSVDEWHIHSSAEDFRTQRCVCAVKLSASLLGCLLACASWSLLLEVSRIKWHVGTAYS</sequence>